<evidence type="ECO:0000255" key="1">
    <source>
        <dbReference type="HAMAP-Rule" id="MF_01061"/>
    </source>
</evidence>
<evidence type="ECO:0000256" key="2">
    <source>
        <dbReference type="SAM" id="MobiDB-lite"/>
    </source>
</evidence>
<organism>
    <name type="scientific">Salmonella paratyphi A (strain ATCC 9150 / SARB42)</name>
    <dbReference type="NCBI Taxonomy" id="295319"/>
    <lineage>
        <taxon>Bacteria</taxon>
        <taxon>Pseudomonadati</taxon>
        <taxon>Pseudomonadota</taxon>
        <taxon>Gammaproteobacteria</taxon>
        <taxon>Enterobacterales</taxon>
        <taxon>Enterobacteriaceae</taxon>
        <taxon>Salmonella</taxon>
    </lineage>
</organism>
<keyword id="KW-0235">DNA replication</keyword>
<keyword id="KW-0238">DNA-binding</keyword>
<keyword id="KW-0639">Primosome</keyword>
<dbReference type="EMBL" id="CP000026">
    <property type="protein sequence ID" value="AAV80084.1"/>
    <property type="molecule type" value="Genomic_DNA"/>
</dbReference>
<dbReference type="RefSeq" id="WP_000098578.1">
    <property type="nucleotide sequence ID" value="NC_006511.1"/>
</dbReference>
<dbReference type="SMR" id="Q5PM73"/>
<dbReference type="KEGG" id="spt:SPA4358"/>
<dbReference type="HOGENOM" id="CLU_1501592_0_0_6"/>
<dbReference type="Proteomes" id="UP000008185">
    <property type="component" value="Chromosome"/>
</dbReference>
<dbReference type="GO" id="GO:1990077">
    <property type="term" value="C:primosome complex"/>
    <property type="evidence" value="ECO:0007669"/>
    <property type="project" value="UniProtKB-KW"/>
</dbReference>
<dbReference type="GO" id="GO:0006269">
    <property type="term" value="P:DNA replication, synthesis of primer"/>
    <property type="evidence" value="ECO:0007669"/>
    <property type="project" value="UniProtKB-UniRule"/>
</dbReference>
<dbReference type="Gene3D" id="1.10.8.1180">
    <property type="match status" value="1"/>
</dbReference>
<dbReference type="HAMAP" id="MF_01061">
    <property type="entry name" value="DnaT"/>
    <property type="match status" value="1"/>
</dbReference>
<dbReference type="InterPro" id="IPR020917">
    <property type="entry name" value="DnaT"/>
</dbReference>
<dbReference type="InterPro" id="IPR040480">
    <property type="entry name" value="DnaT_DNA_bind"/>
</dbReference>
<dbReference type="NCBIfam" id="NF002770">
    <property type="entry name" value="PRK02854.1"/>
    <property type="match status" value="1"/>
</dbReference>
<dbReference type="Pfam" id="PF17948">
    <property type="entry name" value="DnaT"/>
    <property type="match status" value="1"/>
</dbReference>
<accession>Q5PM73</accession>
<sequence>MSSRILTSDVIGIDVLLHDHHAVLAKSTGGAVAVFANNAPAFYAVTPARMAELLALEEKLSRPGSDVALDAQFYEEPEAAPVAIPCGKFAMYPAWQPDADFQRQAALWGVALREPVTAEELAAFIAYWQAEGKVFHHIQWQQKLARSVQISRSSNGGMPQRDINSVSEPDNHIPPGFRG</sequence>
<gene>
    <name evidence="1" type="primary">dnaT</name>
    <name type="ordered locus">SPA4358</name>
</gene>
<reference key="1">
    <citation type="journal article" date="2004" name="Nat. Genet.">
        <title>Comparison of genome degradation in Paratyphi A and Typhi, human-restricted serovars of Salmonella enterica that cause typhoid.</title>
        <authorList>
            <person name="McClelland M."/>
            <person name="Sanderson K.E."/>
            <person name="Clifton S.W."/>
            <person name="Latreille P."/>
            <person name="Porwollik S."/>
            <person name="Sabo A."/>
            <person name="Meyer R."/>
            <person name="Bieri T."/>
            <person name="Ozersky P."/>
            <person name="McLellan M."/>
            <person name="Harkins C.R."/>
            <person name="Wang C."/>
            <person name="Nguyen C."/>
            <person name="Berghoff A."/>
            <person name="Elliott G."/>
            <person name="Kohlberg S."/>
            <person name="Strong C."/>
            <person name="Du F."/>
            <person name="Carter J."/>
            <person name="Kremizki C."/>
            <person name="Layman D."/>
            <person name="Leonard S."/>
            <person name="Sun H."/>
            <person name="Fulton L."/>
            <person name="Nash W."/>
            <person name="Miner T."/>
            <person name="Minx P."/>
            <person name="Delehaunty K."/>
            <person name="Fronick C."/>
            <person name="Magrini V."/>
            <person name="Nhan M."/>
            <person name="Warren W."/>
            <person name="Florea L."/>
            <person name="Spieth J."/>
            <person name="Wilson R.K."/>
        </authorList>
    </citation>
    <scope>NUCLEOTIDE SEQUENCE [LARGE SCALE GENOMIC DNA]</scope>
    <source>
        <strain>ATCC 9150 / SARB42</strain>
    </source>
</reference>
<feature type="chain" id="PRO_0000199872" description="Replication restart protein DnaT">
    <location>
        <begin position="1"/>
        <end position="179"/>
    </location>
</feature>
<feature type="region of interest" description="Disordered" evidence="2">
    <location>
        <begin position="151"/>
        <end position="179"/>
    </location>
</feature>
<feature type="compositionally biased region" description="Polar residues" evidence="2">
    <location>
        <begin position="151"/>
        <end position="168"/>
    </location>
</feature>
<name>DNAT_SALPA</name>
<proteinExistence type="inferred from homology"/>
<protein>
    <recommendedName>
        <fullName evidence="1">Replication restart protein DnaT</fullName>
    </recommendedName>
</protein>
<comment type="function">
    <text evidence="1">Involved in the restart of stalled replication forks, which reloads the replicative helicase on sites other than the origin of replication. Can function in multiple replication restart pathways. Displaces ssDNA from a PriB-ssDNA complex. Probably forms a spiral filament on ssDNA.</text>
</comment>
<comment type="subunit">
    <text evidence="1">Homooligomerizes. Interacts with PriB. Component of the replication restart primosome. Primosome assembly occurs via a 'hand-off' mechanism. PriA binds to replication forks, subsequently PriB then DnaT bind; DnaT then displaces ssDNA to generate the helicase loading substrate.</text>
</comment>
<comment type="similarity">
    <text evidence="1">Belongs to the DnaT family.</text>
</comment>